<organism>
    <name type="scientific">Bacillus subtilis (strain 168)</name>
    <dbReference type="NCBI Taxonomy" id="224308"/>
    <lineage>
        <taxon>Bacteria</taxon>
        <taxon>Bacillati</taxon>
        <taxon>Bacillota</taxon>
        <taxon>Bacilli</taxon>
        <taxon>Bacillales</taxon>
        <taxon>Bacillaceae</taxon>
        <taxon>Bacillus</taxon>
    </lineage>
</organism>
<gene>
    <name type="primary">yrbC</name>
    <name type="ordered locus">BSU27820</name>
</gene>
<name>YRBC_BACSU</name>
<feature type="chain" id="PRO_0000175763" description="Probable transcriptional regulatory protein YrbC">
    <location>
        <begin position="1"/>
        <end position="240"/>
    </location>
</feature>
<protein>
    <recommendedName>
        <fullName evidence="1">Probable transcriptional regulatory protein YrbC</fullName>
    </recommendedName>
</protein>
<comment type="subcellular location">
    <subcellularLocation>
        <location evidence="1">Cytoplasm</location>
    </subcellularLocation>
</comment>
<comment type="similarity">
    <text evidence="1">Belongs to the TACO1 family.</text>
</comment>
<accession>P94447</accession>
<sequence>MAGHSKWKNIQKRKNAQDAKRGKIFMKLAKEIYVAAKEGGADPEANSALRLVIEKAKGANMPNENIDRAIKKAAGGQDGSSYEEITYEGYGPSGIAVMVECVTDNKNRTASNVRTAFNKNGGSLGESGCVAFLFERKGFITIDRTERQIEEDELMLDVLEAGGEELRIEEDLYEVFTEPEHFEEVKTALESKYLISSAEVTMLPNTYAEADDQAVEKLETLIDVLEDDDDVQEVYTNYRS</sequence>
<dbReference type="EMBL" id="Y15896">
    <property type="protein sequence ID" value="CAB75324.1"/>
    <property type="molecule type" value="Genomic_DNA"/>
</dbReference>
<dbReference type="EMBL" id="AL009126">
    <property type="protein sequence ID" value="CAB14742.1"/>
    <property type="molecule type" value="Genomic_DNA"/>
</dbReference>
<dbReference type="EMBL" id="D50551">
    <property type="protein sequence ID" value="BAA09118.1"/>
    <property type="molecule type" value="Genomic_DNA"/>
</dbReference>
<dbReference type="PIR" id="B69972">
    <property type="entry name" value="B69972"/>
</dbReference>
<dbReference type="RefSeq" id="NP_390660.1">
    <property type="nucleotide sequence ID" value="NC_000964.3"/>
</dbReference>
<dbReference type="RefSeq" id="WP_004398802.1">
    <property type="nucleotide sequence ID" value="NZ_OZ025638.1"/>
</dbReference>
<dbReference type="SMR" id="P94447"/>
<dbReference type="FunCoup" id="P94447">
    <property type="interactions" value="639"/>
</dbReference>
<dbReference type="STRING" id="224308.BSU27820"/>
<dbReference type="PaxDb" id="224308-BSU27820"/>
<dbReference type="EnsemblBacteria" id="CAB14742">
    <property type="protein sequence ID" value="CAB14742"/>
    <property type="gene ID" value="BSU_27820"/>
</dbReference>
<dbReference type="GeneID" id="937517"/>
<dbReference type="KEGG" id="bsu:BSU27820"/>
<dbReference type="PATRIC" id="fig|224308.179.peg.3023"/>
<dbReference type="eggNOG" id="COG0217">
    <property type="taxonomic scope" value="Bacteria"/>
</dbReference>
<dbReference type="InParanoid" id="P94447"/>
<dbReference type="OrthoDB" id="9781053at2"/>
<dbReference type="PhylomeDB" id="P94447"/>
<dbReference type="BioCyc" id="BSUB:BSU27820-MONOMER"/>
<dbReference type="Proteomes" id="UP000001570">
    <property type="component" value="Chromosome"/>
</dbReference>
<dbReference type="GO" id="GO:0005829">
    <property type="term" value="C:cytosol"/>
    <property type="evidence" value="ECO:0000318"/>
    <property type="project" value="GO_Central"/>
</dbReference>
<dbReference type="GO" id="GO:0003677">
    <property type="term" value="F:DNA binding"/>
    <property type="evidence" value="ECO:0007669"/>
    <property type="project" value="UniProtKB-UniRule"/>
</dbReference>
<dbReference type="GO" id="GO:0006355">
    <property type="term" value="P:regulation of DNA-templated transcription"/>
    <property type="evidence" value="ECO:0007669"/>
    <property type="project" value="UniProtKB-UniRule"/>
</dbReference>
<dbReference type="FunFam" id="1.10.10.200:FF:000002">
    <property type="entry name" value="Probable transcriptional regulatory protein CLM62_37755"/>
    <property type="match status" value="1"/>
</dbReference>
<dbReference type="FunFam" id="3.30.70.980:FF:000002">
    <property type="entry name" value="Probable transcriptional regulatory protein YebC"/>
    <property type="match status" value="1"/>
</dbReference>
<dbReference type="Gene3D" id="1.10.10.200">
    <property type="match status" value="1"/>
</dbReference>
<dbReference type="Gene3D" id="3.30.70.980">
    <property type="match status" value="2"/>
</dbReference>
<dbReference type="HAMAP" id="MF_00693">
    <property type="entry name" value="Transcrip_reg_TACO1"/>
    <property type="match status" value="1"/>
</dbReference>
<dbReference type="InterPro" id="IPR017856">
    <property type="entry name" value="Integrase-like_N"/>
</dbReference>
<dbReference type="InterPro" id="IPR048300">
    <property type="entry name" value="TACO1_YebC-like_2nd/3rd_dom"/>
</dbReference>
<dbReference type="InterPro" id="IPR049083">
    <property type="entry name" value="TACO1_YebC_N"/>
</dbReference>
<dbReference type="InterPro" id="IPR002876">
    <property type="entry name" value="Transcrip_reg_TACO1-like"/>
</dbReference>
<dbReference type="InterPro" id="IPR026564">
    <property type="entry name" value="Transcrip_reg_TACO1-like_dom3"/>
</dbReference>
<dbReference type="InterPro" id="IPR029072">
    <property type="entry name" value="YebC-like"/>
</dbReference>
<dbReference type="NCBIfam" id="NF001030">
    <property type="entry name" value="PRK00110.1"/>
    <property type="match status" value="1"/>
</dbReference>
<dbReference type="NCBIfam" id="NF009044">
    <property type="entry name" value="PRK12378.1"/>
    <property type="match status" value="1"/>
</dbReference>
<dbReference type="NCBIfam" id="TIGR01033">
    <property type="entry name" value="YebC/PmpR family DNA-binding transcriptional regulator"/>
    <property type="match status" value="1"/>
</dbReference>
<dbReference type="PANTHER" id="PTHR12532:SF6">
    <property type="entry name" value="TRANSCRIPTIONAL REGULATORY PROTEIN YEBC-RELATED"/>
    <property type="match status" value="1"/>
</dbReference>
<dbReference type="PANTHER" id="PTHR12532">
    <property type="entry name" value="TRANSLATIONAL ACTIVATOR OF CYTOCHROME C OXIDASE 1"/>
    <property type="match status" value="1"/>
</dbReference>
<dbReference type="Pfam" id="PF20772">
    <property type="entry name" value="TACO1_YebC_N"/>
    <property type="match status" value="1"/>
</dbReference>
<dbReference type="Pfam" id="PF01709">
    <property type="entry name" value="Transcrip_reg"/>
    <property type="match status" value="1"/>
</dbReference>
<dbReference type="SUPFAM" id="SSF75625">
    <property type="entry name" value="YebC-like"/>
    <property type="match status" value="1"/>
</dbReference>
<evidence type="ECO:0000255" key="1">
    <source>
        <dbReference type="HAMAP-Rule" id="MF_00693"/>
    </source>
</evidence>
<proteinExistence type="inferred from homology"/>
<reference key="1">
    <citation type="submission" date="1997-12" db="EMBL/GenBank/DDBJ databases">
        <title>A 17.8 kb segment in the spoVB-nadC region of the Bacillus subtilis 168 chromosome: sequencing and ruv operon identification.</title>
        <authorList>
            <person name="Tosato V."/>
            <person name="Bolotin A."/>
            <person name="Bertani I."/>
            <person name="Valentino I."/>
            <person name="Bruschi C.V."/>
        </authorList>
    </citation>
    <scope>NUCLEOTIDE SEQUENCE [GENOMIC DNA]</scope>
    <source>
        <strain>168</strain>
    </source>
</reference>
<reference key="2">
    <citation type="journal article" date="1997" name="Nature">
        <title>The complete genome sequence of the Gram-positive bacterium Bacillus subtilis.</title>
        <authorList>
            <person name="Kunst F."/>
            <person name="Ogasawara N."/>
            <person name="Moszer I."/>
            <person name="Albertini A.M."/>
            <person name="Alloni G."/>
            <person name="Azevedo V."/>
            <person name="Bertero M.G."/>
            <person name="Bessieres P."/>
            <person name="Bolotin A."/>
            <person name="Borchert S."/>
            <person name="Borriss R."/>
            <person name="Boursier L."/>
            <person name="Brans A."/>
            <person name="Braun M."/>
            <person name="Brignell S.C."/>
            <person name="Bron S."/>
            <person name="Brouillet S."/>
            <person name="Bruschi C.V."/>
            <person name="Caldwell B."/>
            <person name="Capuano V."/>
            <person name="Carter N.M."/>
            <person name="Choi S.-K."/>
            <person name="Codani J.-J."/>
            <person name="Connerton I.F."/>
            <person name="Cummings N.J."/>
            <person name="Daniel R.A."/>
            <person name="Denizot F."/>
            <person name="Devine K.M."/>
            <person name="Duesterhoeft A."/>
            <person name="Ehrlich S.D."/>
            <person name="Emmerson P.T."/>
            <person name="Entian K.-D."/>
            <person name="Errington J."/>
            <person name="Fabret C."/>
            <person name="Ferrari E."/>
            <person name="Foulger D."/>
            <person name="Fritz C."/>
            <person name="Fujita M."/>
            <person name="Fujita Y."/>
            <person name="Fuma S."/>
            <person name="Galizzi A."/>
            <person name="Galleron N."/>
            <person name="Ghim S.-Y."/>
            <person name="Glaser P."/>
            <person name="Goffeau A."/>
            <person name="Golightly E.J."/>
            <person name="Grandi G."/>
            <person name="Guiseppi G."/>
            <person name="Guy B.J."/>
            <person name="Haga K."/>
            <person name="Haiech J."/>
            <person name="Harwood C.R."/>
            <person name="Henaut A."/>
            <person name="Hilbert H."/>
            <person name="Holsappel S."/>
            <person name="Hosono S."/>
            <person name="Hullo M.-F."/>
            <person name="Itaya M."/>
            <person name="Jones L.-M."/>
            <person name="Joris B."/>
            <person name="Karamata D."/>
            <person name="Kasahara Y."/>
            <person name="Klaerr-Blanchard M."/>
            <person name="Klein C."/>
            <person name="Kobayashi Y."/>
            <person name="Koetter P."/>
            <person name="Koningstein G."/>
            <person name="Krogh S."/>
            <person name="Kumano M."/>
            <person name="Kurita K."/>
            <person name="Lapidus A."/>
            <person name="Lardinois S."/>
            <person name="Lauber J."/>
            <person name="Lazarevic V."/>
            <person name="Lee S.-M."/>
            <person name="Levine A."/>
            <person name="Liu H."/>
            <person name="Masuda S."/>
            <person name="Mauel C."/>
            <person name="Medigue C."/>
            <person name="Medina N."/>
            <person name="Mellado R.P."/>
            <person name="Mizuno M."/>
            <person name="Moestl D."/>
            <person name="Nakai S."/>
            <person name="Noback M."/>
            <person name="Noone D."/>
            <person name="O'Reilly M."/>
            <person name="Ogawa K."/>
            <person name="Ogiwara A."/>
            <person name="Oudega B."/>
            <person name="Park S.-H."/>
            <person name="Parro V."/>
            <person name="Pohl T.M."/>
            <person name="Portetelle D."/>
            <person name="Porwollik S."/>
            <person name="Prescott A.M."/>
            <person name="Presecan E."/>
            <person name="Pujic P."/>
            <person name="Purnelle B."/>
            <person name="Rapoport G."/>
            <person name="Rey M."/>
            <person name="Reynolds S."/>
            <person name="Rieger M."/>
            <person name="Rivolta C."/>
            <person name="Rocha E."/>
            <person name="Roche B."/>
            <person name="Rose M."/>
            <person name="Sadaie Y."/>
            <person name="Sato T."/>
            <person name="Scanlan E."/>
            <person name="Schleich S."/>
            <person name="Schroeter R."/>
            <person name="Scoffone F."/>
            <person name="Sekiguchi J."/>
            <person name="Sekowska A."/>
            <person name="Seror S.J."/>
            <person name="Serror P."/>
            <person name="Shin B.-S."/>
            <person name="Soldo B."/>
            <person name="Sorokin A."/>
            <person name="Tacconi E."/>
            <person name="Takagi T."/>
            <person name="Takahashi H."/>
            <person name="Takemaru K."/>
            <person name="Takeuchi M."/>
            <person name="Tamakoshi A."/>
            <person name="Tanaka T."/>
            <person name="Terpstra P."/>
            <person name="Tognoni A."/>
            <person name="Tosato V."/>
            <person name="Uchiyama S."/>
            <person name="Vandenbol M."/>
            <person name="Vannier F."/>
            <person name="Vassarotti A."/>
            <person name="Viari A."/>
            <person name="Wambutt R."/>
            <person name="Wedler E."/>
            <person name="Wedler H."/>
            <person name="Weitzenegger T."/>
            <person name="Winters P."/>
            <person name="Wipat A."/>
            <person name="Yamamoto H."/>
            <person name="Yamane K."/>
            <person name="Yasumoto K."/>
            <person name="Yata K."/>
            <person name="Yoshida K."/>
            <person name="Yoshikawa H.-F."/>
            <person name="Zumstein E."/>
            <person name="Yoshikawa H."/>
            <person name="Danchin A."/>
        </authorList>
    </citation>
    <scope>NUCLEOTIDE SEQUENCE [LARGE SCALE GENOMIC DNA]</scope>
    <source>
        <strain>168</strain>
    </source>
</reference>
<reference key="3">
    <citation type="journal article" date="1998" name="FEMS Microbiol. Lett.">
        <title>Cloning of a novel gene yrbB, encoding a protein located in the spore integument of Bacillus subtilis.</title>
        <authorList>
            <person name="Takamatsu H."/>
            <person name="Hiraoka T."/>
            <person name="Kodama T."/>
            <person name="Koide H."/>
            <person name="Kozuka S."/>
            <person name="Tochikubo K."/>
            <person name="Watabe K."/>
        </authorList>
    </citation>
    <scope>NUCLEOTIDE SEQUENCE [GENOMIC DNA] OF 1-154</scope>
    <source>
        <strain>168 / 60015</strain>
    </source>
</reference>
<keyword id="KW-0963">Cytoplasm</keyword>
<keyword id="KW-0238">DNA-binding</keyword>
<keyword id="KW-1185">Reference proteome</keyword>
<keyword id="KW-0804">Transcription</keyword>
<keyword id="KW-0805">Transcription regulation</keyword>